<name>ATP25_TRIVH</name>
<proteinExistence type="inferred from homology"/>
<comment type="function">
    <text evidence="1">Probable mitochondrial mRNA stabilization factor.</text>
</comment>
<comment type="subcellular location">
    <subcellularLocation>
        <location evidence="1">Mitochondrion inner membrane</location>
        <topology evidence="1">Peripheral membrane protein</topology>
        <orientation evidence="1">Matrix side</orientation>
    </subcellularLocation>
</comment>
<comment type="similarity">
    <text evidence="4">Belongs to the ATP25 family.</text>
</comment>
<protein>
    <recommendedName>
        <fullName>ATPase synthesis protein 25, mitochondrial</fullName>
    </recommendedName>
</protein>
<sequence>MSGIALQGFRCHACRNAAFRSFAAISSLSSSTRRPQSSISYPGSKLYQRNVRTTGRRQFSALGSVQSQADSDLPTKTETKEDTSAESSHIPWYLQDESHKPSSHPLKQQELPPLPENPPPILENLLQYISVDAGLDDLALLDLRGLDPPPALGANLIMIIGTARSVKHLNVSGDRLCRWLRSNYQLRPVADGLLGRNDLKIKLRRRARKAKVTGDASSLNSRDDGITTGWICVNVGDVENGPLKTKNSRNRNFIGFGGTEDKVRIVVQMLVEETRSELQLEALWGSLLNPEAGEMNPAPRDDVWGDLSSETTSSGKGVDSIASTFSQRFPGRRHIHTQARPNTPEPLSHETLGDIVQESRPALPSKIVSTSMASPNVSSLLEQLSRLPEEEARRELGLGPGDRDSTLFLRLFYEAVSKSDTETVLIDKLSFARAAVLLKHPAYRKADLYRAFKSMAASGCSISEELAMDTVRTLLSFQGPENAANERVPEQDIDLALRVLEHMSLRGINIFNGEVFFLLHKASAFQSHVPANDAPGAMNTSVNPDSVSKVQVEELDRITTVHNRLSKLMASANVDFDYKDYPELLKMYFEHGNYSNFWRLWHRIPLMQIPRTKELYLLMFRLHAKLGHQRQAVDCLSSWVPMMAREQPPVALDEELTRAIMACMLVADPAIDQKTDDGTVSQFTRLWKQCLRDLESFKAANSQ</sequence>
<keyword id="KW-0472">Membrane</keyword>
<keyword id="KW-0496">Mitochondrion</keyword>
<keyword id="KW-0999">Mitochondrion inner membrane</keyword>
<keyword id="KW-0809">Transit peptide</keyword>
<accession>D4D5X3</accession>
<reference key="1">
    <citation type="journal article" date="2011" name="Genome Biol.">
        <title>Comparative and functional genomics provide insights into the pathogenicity of dermatophytic fungi.</title>
        <authorList>
            <person name="Burmester A."/>
            <person name="Shelest E."/>
            <person name="Gloeckner G."/>
            <person name="Heddergott C."/>
            <person name="Schindler S."/>
            <person name="Staib P."/>
            <person name="Heidel A."/>
            <person name="Felder M."/>
            <person name="Petzold A."/>
            <person name="Szafranski K."/>
            <person name="Feuermann M."/>
            <person name="Pedruzzi I."/>
            <person name="Priebe S."/>
            <person name="Groth M."/>
            <person name="Winkler R."/>
            <person name="Li W."/>
            <person name="Kniemeyer O."/>
            <person name="Schroeckh V."/>
            <person name="Hertweck C."/>
            <person name="Hube B."/>
            <person name="White T.C."/>
            <person name="Platzer M."/>
            <person name="Guthke R."/>
            <person name="Heitman J."/>
            <person name="Woestemeyer J."/>
            <person name="Zipfel P.F."/>
            <person name="Monod M."/>
            <person name="Brakhage A.A."/>
        </authorList>
    </citation>
    <scope>NUCLEOTIDE SEQUENCE [LARGE SCALE GENOMIC DNA]</scope>
    <source>
        <strain>HKI 0517</strain>
    </source>
</reference>
<gene>
    <name type="primary">ATP25</name>
    <name type="ORF">TRV_02496</name>
</gene>
<evidence type="ECO:0000250" key="1"/>
<evidence type="ECO:0000255" key="2"/>
<evidence type="ECO:0000256" key="3">
    <source>
        <dbReference type="SAM" id="MobiDB-lite"/>
    </source>
</evidence>
<evidence type="ECO:0000305" key="4"/>
<feature type="transit peptide" description="Mitochondrion" evidence="2">
    <location>
        <begin position="1"/>
        <end position="42"/>
    </location>
</feature>
<feature type="chain" id="PRO_0000404488" description="ATPase synthesis protein 25, mitochondrial">
    <location>
        <begin position="43"/>
        <end position="703"/>
    </location>
</feature>
<feature type="region of interest" description="Disordered" evidence="3">
    <location>
        <begin position="60"/>
        <end position="88"/>
    </location>
</feature>
<feature type="compositionally biased region" description="Polar residues" evidence="3">
    <location>
        <begin position="60"/>
        <end position="72"/>
    </location>
</feature>
<feature type="compositionally biased region" description="Basic and acidic residues" evidence="3">
    <location>
        <begin position="73"/>
        <end position="83"/>
    </location>
</feature>
<dbReference type="EMBL" id="ACYE01000129">
    <property type="protein sequence ID" value="EFE42776.1"/>
    <property type="molecule type" value="Genomic_DNA"/>
</dbReference>
<dbReference type="RefSeq" id="XP_003023394.1">
    <property type="nucleotide sequence ID" value="XM_003023348.1"/>
</dbReference>
<dbReference type="SMR" id="D4D5X3"/>
<dbReference type="GeneID" id="9583414"/>
<dbReference type="KEGG" id="tve:TRV_02496"/>
<dbReference type="HOGENOM" id="CLU_016140_0_0_1"/>
<dbReference type="OrthoDB" id="5353at34384"/>
<dbReference type="Proteomes" id="UP000008383">
    <property type="component" value="Unassembled WGS sequence"/>
</dbReference>
<dbReference type="GO" id="GO:0005743">
    <property type="term" value="C:mitochondrial inner membrane"/>
    <property type="evidence" value="ECO:0007669"/>
    <property type="project" value="UniProtKB-SubCell"/>
</dbReference>
<dbReference type="GO" id="GO:0140053">
    <property type="term" value="P:mitochondrial gene expression"/>
    <property type="evidence" value="ECO:0007669"/>
    <property type="project" value="InterPro"/>
</dbReference>
<dbReference type="GO" id="GO:0048255">
    <property type="term" value="P:mRNA stabilization"/>
    <property type="evidence" value="ECO:0007669"/>
    <property type="project" value="TreeGrafter"/>
</dbReference>
<dbReference type="FunFam" id="3.30.460.10:FF:000044">
    <property type="entry name" value="ATPase synthesis protein 25, mitochondrial"/>
    <property type="match status" value="1"/>
</dbReference>
<dbReference type="Gene3D" id="3.30.460.10">
    <property type="entry name" value="Beta Polymerase, domain 2"/>
    <property type="match status" value="1"/>
</dbReference>
<dbReference type="InterPro" id="IPR040152">
    <property type="entry name" value="Atp25"/>
</dbReference>
<dbReference type="InterPro" id="IPR043519">
    <property type="entry name" value="NT_sf"/>
</dbReference>
<dbReference type="PANTHER" id="PTHR28087">
    <property type="entry name" value="ATPASE SYNTHESIS PROTEIN 25, MITOCHONDRIAL"/>
    <property type="match status" value="1"/>
</dbReference>
<dbReference type="PANTHER" id="PTHR28087:SF1">
    <property type="entry name" value="ATPASE SYNTHESIS PROTEIN 25, MITOCHONDRIAL"/>
    <property type="match status" value="1"/>
</dbReference>
<organism>
    <name type="scientific">Trichophyton verrucosum (strain HKI 0517)</name>
    <dbReference type="NCBI Taxonomy" id="663202"/>
    <lineage>
        <taxon>Eukaryota</taxon>
        <taxon>Fungi</taxon>
        <taxon>Dikarya</taxon>
        <taxon>Ascomycota</taxon>
        <taxon>Pezizomycotina</taxon>
        <taxon>Eurotiomycetes</taxon>
        <taxon>Eurotiomycetidae</taxon>
        <taxon>Onygenales</taxon>
        <taxon>Arthrodermataceae</taxon>
        <taxon>Trichophyton</taxon>
    </lineage>
</organism>